<feature type="chain" id="PRO_0000113842" description="Protein GrpE">
    <location>
        <begin position="1"/>
        <end position="199"/>
    </location>
</feature>
<feature type="region of interest" description="Disordered" evidence="2">
    <location>
        <begin position="1"/>
        <end position="27"/>
    </location>
</feature>
<feature type="compositionally biased region" description="Basic and acidic residues" evidence="2">
    <location>
        <begin position="18"/>
        <end position="27"/>
    </location>
</feature>
<name>GRPE_PSYS1</name>
<accession>Q9L516</accession>
<sequence length="199" mass="22145">MSEQNTNHESPEQNVAHDNIEHSDSILEETMKEFDPQHNSGEEMTIENEIDLDTFKARIAELEGEVKEAKEGTARANAEAYDAQKRMEQEADKSKKFALQKFARELLEIVDNLERAIENADANDPVAEGVQLTHKALLAVLHKNGIEVVDPQGEKFNADLHEAVDIDAEAEADTVGTVLQKGYSLNGRLLRPAMVRVGQ</sequence>
<dbReference type="EMBL" id="AF260706">
    <property type="protein sequence ID" value="AAF70336.1"/>
    <property type="molecule type" value="Genomic_DNA"/>
</dbReference>
<dbReference type="SMR" id="Q9L516"/>
<dbReference type="GO" id="GO:0005829">
    <property type="term" value="C:cytosol"/>
    <property type="evidence" value="ECO:0007669"/>
    <property type="project" value="TreeGrafter"/>
</dbReference>
<dbReference type="GO" id="GO:0000774">
    <property type="term" value="F:adenyl-nucleotide exchange factor activity"/>
    <property type="evidence" value="ECO:0007669"/>
    <property type="project" value="InterPro"/>
</dbReference>
<dbReference type="GO" id="GO:0042803">
    <property type="term" value="F:protein homodimerization activity"/>
    <property type="evidence" value="ECO:0007669"/>
    <property type="project" value="InterPro"/>
</dbReference>
<dbReference type="GO" id="GO:0051087">
    <property type="term" value="F:protein-folding chaperone binding"/>
    <property type="evidence" value="ECO:0007669"/>
    <property type="project" value="InterPro"/>
</dbReference>
<dbReference type="GO" id="GO:0051082">
    <property type="term" value="F:unfolded protein binding"/>
    <property type="evidence" value="ECO:0007669"/>
    <property type="project" value="TreeGrafter"/>
</dbReference>
<dbReference type="GO" id="GO:0006457">
    <property type="term" value="P:protein folding"/>
    <property type="evidence" value="ECO:0007669"/>
    <property type="project" value="InterPro"/>
</dbReference>
<dbReference type="CDD" id="cd00446">
    <property type="entry name" value="GrpE"/>
    <property type="match status" value="1"/>
</dbReference>
<dbReference type="Gene3D" id="3.90.20.20">
    <property type="match status" value="1"/>
</dbReference>
<dbReference type="Gene3D" id="2.30.22.10">
    <property type="entry name" value="Head domain of nucleotide exchange factor GrpE"/>
    <property type="match status" value="1"/>
</dbReference>
<dbReference type="HAMAP" id="MF_01151">
    <property type="entry name" value="GrpE"/>
    <property type="match status" value="1"/>
</dbReference>
<dbReference type="InterPro" id="IPR000740">
    <property type="entry name" value="GrpE"/>
</dbReference>
<dbReference type="InterPro" id="IPR013805">
    <property type="entry name" value="GrpE_coiled_coil"/>
</dbReference>
<dbReference type="InterPro" id="IPR009012">
    <property type="entry name" value="GrpE_head"/>
</dbReference>
<dbReference type="NCBIfam" id="NF010748">
    <property type="entry name" value="PRK14150.1"/>
    <property type="match status" value="1"/>
</dbReference>
<dbReference type="PANTHER" id="PTHR21237">
    <property type="entry name" value="GRPE PROTEIN"/>
    <property type="match status" value="1"/>
</dbReference>
<dbReference type="PANTHER" id="PTHR21237:SF23">
    <property type="entry name" value="GRPE PROTEIN HOMOLOG, MITOCHONDRIAL"/>
    <property type="match status" value="1"/>
</dbReference>
<dbReference type="Pfam" id="PF01025">
    <property type="entry name" value="GrpE"/>
    <property type="match status" value="1"/>
</dbReference>
<dbReference type="PRINTS" id="PR00773">
    <property type="entry name" value="GRPEPROTEIN"/>
</dbReference>
<dbReference type="SUPFAM" id="SSF58014">
    <property type="entry name" value="Coiled-coil domain of nucleotide exchange factor GrpE"/>
    <property type="match status" value="1"/>
</dbReference>
<dbReference type="SUPFAM" id="SSF51064">
    <property type="entry name" value="Head domain of nucleotide exchange factor GrpE"/>
    <property type="match status" value="1"/>
</dbReference>
<dbReference type="PROSITE" id="PS01071">
    <property type="entry name" value="GRPE"/>
    <property type="match status" value="1"/>
</dbReference>
<organism>
    <name type="scientific">Psychrobacter sp. (strain St1)</name>
    <dbReference type="NCBI Taxonomy" id="125076"/>
    <lineage>
        <taxon>Bacteria</taxon>
        <taxon>Pseudomonadati</taxon>
        <taxon>Pseudomonadota</taxon>
        <taxon>Gammaproteobacteria</taxon>
        <taxon>Moraxellales</taxon>
        <taxon>Moraxellaceae</taxon>
        <taxon>Psychrobacter</taxon>
    </lineage>
</organism>
<reference key="1">
    <citation type="submission" date="2000-04" db="EMBL/GenBank/DDBJ databases">
        <title>DnaK from cold adapted antarctic bacterium Psychrobacter sp. St1: dnaK gene cluster cloning and the protein characterization.</title>
        <authorList>
            <person name="Galkin A."/>
            <person name="Yoshimune K."/>
            <person name="Kulakova L."/>
            <person name="Yoshimura T."/>
            <person name="Hirayama S."/>
            <person name="Esaki N."/>
        </authorList>
    </citation>
    <scope>NUCLEOTIDE SEQUENCE [GENOMIC DNA]</scope>
    <source>
        <strain>St1</strain>
    </source>
</reference>
<proteinExistence type="inferred from homology"/>
<keyword id="KW-0143">Chaperone</keyword>
<keyword id="KW-0963">Cytoplasm</keyword>
<keyword id="KW-0346">Stress response</keyword>
<comment type="function">
    <text evidence="1">Participates actively in the response to hyperosmotic and heat shock by preventing the aggregation of stress-denatured proteins, in association with DnaK and GrpE. It is the nucleotide exchange factor for DnaK and may function as a thermosensor. Unfolded proteins bind initially to DnaJ; upon interaction with the DnaJ-bound protein, DnaK hydrolyzes its bound ATP, resulting in the formation of a stable complex. GrpE releases ADP from DnaK; ATP binding to DnaK triggers the release of the substrate protein, thus completing the reaction cycle. Several rounds of ATP-dependent interactions between DnaJ, DnaK and GrpE are required for fully efficient folding.</text>
</comment>
<comment type="subunit">
    <text evidence="1">Homodimer.</text>
</comment>
<comment type="subcellular location">
    <subcellularLocation>
        <location evidence="1">Cytoplasm</location>
    </subcellularLocation>
</comment>
<comment type="similarity">
    <text evidence="1">Belongs to the GrpE family.</text>
</comment>
<gene>
    <name evidence="1" type="primary">grpE</name>
</gene>
<evidence type="ECO:0000255" key="1">
    <source>
        <dbReference type="HAMAP-Rule" id="MF_01151"/>
    </source>
</evidence>
<evidence type="ECO:0000256" key="2">
    <source>
        <dbReference type="SAM" id="MobiDB-lite"/>
    </source>
</evidence>
<protein>
    <recommendedName>
        <fullName evidence="1">Protein GrpE</fullName>
    </recommendedName>
    <alternativeName>
        <fullName evidence="1">HSP-70 cofactor</fullName>
    </alternativeName>
</protein>